<keyword id="KW-0066">ATP synthesis</keyword>
<keyword id="KW-0997">Cell inner membrane</keyword>
<keyword id="KW-1003">Cell membrane</keyword>
<keyword id="KW-0138">CF(0)</keyword>
<keyword id="KW-0375">Hydrogen ion transport</keyword>
<keyword id="KW-0406">Ion transport</keyword>
<keyword id="KW-0446">Lipid-binding</keyword>
<keyword id="KW-0472">Membrane</keyword>
<keyword id="KW-0812">Transmembrane</keyword>
<keyword id="KW-1133">Transmembrane helix</keyword>
<keyword id="KW-0813">Transport</keyword>
<name>ATPL_CAMJR</name>
<comment type="function">
    <text evidence="1">F(1)F(0) ATP synthase produces ATP from ADP in the presence of a proton or sodium gradient. F-type ATPases consist of two structural domains, F(1) containing the extramembraneous catalytic core and F(0) containing the membrane proton channel, linked together by a central stalk and a peripheral stalk. During catalysis, ATP synthesis in the catalytic domain of F(1) is coupled via a rotary mechanism of the central stalk subunits to proton translocation.</text>
</comment>
<comment type="function">
    <text evidence="1">Key component of the F(0) channel; it plays a direct role in translocation across the membrane. A homomeric c-ring of between 10-14 subunits forms the central stalk rotor element with the F(1) delta and epsilon subunits.</text>
</comment>
<comment type="subunit">
    <text evidence="1">F-type ATPases have 2 components, F(1) - the catalytic core - and F(0) - the membrane proton channel. F(1) has five subunits: alpha(3), beta(3), gamma(1), delta(1), epsilon(1). F(0) has three main subunits: a(1), b(2) and c(10-14). The alpha and beta chains form an alternating ring which encloses part of the gamma chain. F(1) is attached to F(0) by a central stalk formed by the gamma and epsilon chains, while a peripheral stalk is formed by the delta and b chains.</text>
</comment>
<comment type="subcellular location">
    <subcellularLocation>
        <location evidence="1">Cell inner membrane</location>
        <topology evidence="1">Multi-pass membrane protein</topology>
    </subcellularLocation>
</comment>
<comment type="similarity">
    <text evidence="1">Belongs to the ATPase C chain family.</text>
</comment>
<reference key="1">
    <citation type="journal article" date="2005" name="PLoS Biol.">
        <title>Major structural differences and novel potential virulence mechanisms from the genomes of multiple Campylobacter species.</title>
        <authorList>
            <person name="Fouts D.E."/>
            <person name="Mongodin E.F."/>
            <person name="Mandrell R.E."/>
            <person name="Miller W.G."/>
            <person name="Rasko D.A."/>
            <person name="Ravel J."/>
            <person name="Brinkac L.M."/>
            <person name="DeBoy R.T."/>
            <person name="Parker C.T."/>
            <person name="Daugherty S.C."/>
            <person name="Dodson R.J."/>
            <person name="Durkin A.S."/>
            <person name="Madupu R."/>
            <person name="Sullivan S.A."/>
            <person name="Shetty J.U."/>
            <person name="Ayodeji M.A."/>
            <person name="Shvartsbeyn A."/>
            <person name="Schatz M.C."/>
            <person name="Badger J.H."/>
            <person name="Fraser C.M."/>
            <person name="Nelson K.E."/>
        </authorList>
    </citation>
    <scope>NUCLEOTIDE SEQUENCE [LARGE SCALE GENOMIC DNA]</scope>
    <source>
        <strain>RM1221</strain>
    </source>
</reference>
<sequence length="112" mass="11400">MKKVLFLLLACAAVAFAAEINAPVEQEAINVWIKAFSVLAAGLGLGVAALGGAIGMGNTAAATIAGTARNPGLGPKLMTTMFIALAMIEAQVIYALVIALIALYANPFIVLQ</sequence>
<protein>
    <recommendedName>
        <fullName evidence="1">ATP synthase subunit c</fullName>
    </recommendedName>
    <alternativeName>
        <fullName evidence="1">ATP synthase F(0) sector subunit c</fullName>
    </alternativeName>
    <alternativeName>
        <fullName evidence="1">F-type ATPase subunit c</fullName>
        <shortName evidence="1">F-ATPase subunit c</shortName>
    </alternativeName>
    <alternativeName>
        <fullName evidence="1">Lipid-binding protein</fullName>
    </alternativeName>
</protein>
<accession>Q5HUM3</accession>
<organism>
    <name type="scientific">Campylobacter jejuni (strain RM1221)</name>
    <dbReference type="NCBI Taxonomy" id="195099"/>
    <lineage>
        <taxon>Bacteria</taxon>
        <taxon>Pseudomonadati</taxon>
        <taxon>Campylobacterota</taxon>
        <taxon>Epsilonproteobacteria</taxon>
        <taxon>Campylobacterales</taxon>
        <taxon>Campylobacteraceae</taxon>
        <taxon>Campylobacter</taxon>
    </lineage>
</organism>
<dbReference type="EMBL" id="CP000025">
    <property type="protein sequence ID" value="AAW35347.1"/>
    <property type="molecule type" value="Genomic_DNA"/>
</dbReference>
<dbReference type="RefSeq" id="WP_002860554.1">
    <property type="nucleotide sequence ID" value="NC_003912.7"/>
</dbReference>
<dbReference type="SMR" id="Q5HUM3"/>
<dbReference type="KEGG" id="cjr:CJE1014"/>
<dbReference type="HOGENOM" id="CLU_148047_0_1_7"/>
<dbReference type="GO" id="GO:0005886">
    <property type="term" value="C:plasma membrane"/>
    <property type="evidence" value="ECO:0007669"/>
    <property type="project" value="UniProtKB-SubCell"/>
</dbReference>
<dbReference type="GO" id="GO:0045259">
    <property type="term" value="C:proton-transporting ATP synthase complex"/>
    <property type="evidence" value="ECO:0007669"/>
    <property type="project" value="UniProtKB-KW"/>
</dbReference>
<dbReference type="GO" id="GO:0033177">
    <property type="term" value="C:proton-transporting two-sector ATPase complex, proton-transporting domain"/>
    <property type="evidence" value="ECO:0007669"/>
    <property type="project" value="InterPro"/>
</dbReference>
<dbReference type="GO" id="GO:0008289">
    <property type="term" value="F:lipid binding"/>
    <property type="evidence" value="ECO:0007669"/>
    <property type="project" value="UniProtKB-KW"/>
</dbReference>
<dbReference type="GO" id="GO:0046933">
    <property type="term" value="F:proton-transporting ATP synthase activity, rotational mechanism"/>
    <property type="evidence" value="ECO:0007669"/>
    <property type="project" value="UniProtKB-UniRule"/>
</dbReference>
<dbReference type="CDD" id="cd18121">
    <property type="entry name" value="ATP-synt_Fo_c"/>
    <property type="match status" value="1"/>
</dbReference>
<dbReference type="FunFam" id="1.20.20.10:FF:000002">
    <property type="entry name" value="ATP synthase subunit c"/>
    <property type="match status" value="1"/>
</dbReference>
<dbReference type="Gene3D" id="1.20.20.10">
    <property type="entry name" value="F1F0 ATP synthase subunit C"/>
    <property type="match status" value="1"/>
</dbReference>
<dbReference type="HAMAP" id="MF_01396">
    <property type="entry name" value="ATP_synth_c_bact"/>
    <property type="match status" value="1"/>
</dbReference>
<dbReference type="InterPro" id="IPR005953">
    <property type="entry name" value="ATP_synth_csu_bac/chlpt"/>
</dbReference>
<dbReference type="InterPro" id="IPR000454">
    <property type="entry name" value="ATP_synth_F0_csu"/>
</dbReference>
<dbReference type="InterPro" id="IPR020537">
    <property type="entry name" value="ATP_synth_F0_csu_DDCD_BS"/>
</dbReference>
<dbReference type="InterPro" id="IPR038662">
    <property type="entry name" value="ATP_synth_F0_csu_sf"/>
</dbReference>
<dbReference type="InterPro" id="IPR002379">
    <property type="entry name" value="ATPase_proteolipid_c-like_dom"/>
</dbReference>
<dbReference type="InterPro" id="IPR035921">
    <property type="entry name" value="F/V-ATP_Csub_sf"/>
</dbReference>
<dbReference type="NCBIfam" id="TIGR01260">
    <property type="entry name" value="ATP_synt_c"/>
    <property type="match status" value="1"/>
</dbReference>
<dbReference type="NCBIfam" id="NF006295">
    <property type="entry name" value="PRK08482.1"/>
    <property type="match status" value="1"/>
</dbReference>
<dbReference type="Pfam" id="PF00137">
    <property type="entry name" value="ATP-synt_C"/>
    <property type="match status" value="1"/>
</dbReference>
<dbReference type="PRINTS" id="PR00124">
    <property type="entry name" value="ATPASEC"/>
</dbReference>
<dbReference type="SUPFAM" id="SSF81333">
    <property type="entry name" value="F1F0 ATP synthase subunit C"/>
    <property type="match status" value="1"/>
</dbReference>
<dbReference type="PROSITE" id="PS00605">
    <property type="entry name" value="ATPASE_C"/>
    <property type="match status" value="1"/>
</dbReference>
<feature type="chain" id="PRO_0000365859" description="ATP synthase subunit c">
    <location>
        <begin position="1"/>
        <end position="112"/>
    </location>
</feature>
<feature type="transmembrane region" description="Helical" evidence="1">
    <location>
        <begin position="36"/>
        <end position="56"/>
    </location>
</feature>
<feature type="transmembrane region" description="Helical" evidence="1">
    <location>
        <begin position="81"/>
        <end position="101"/>
    </location>
</feature>
<feature type="site" description="Reversibly protonated during proton transport" evidence="1">
    <location>
        <position position="89"/>
    </location>
</feature>
<gene>
    <name evidence="1" type="primary">atpE</name>
    <name type="ordered locus">CJE1014</name>
</gene>
<evidence type="ECO:0000255" key="1">
    <source>
        <dbReference type="HAMAP-Rule" id="MF_01396"/>
    </source>
</evidence>
<proteinExistence type="inferred from homology"/>